<organism>
    <name type="scientific">Pyropia yezoensis</name>
    <name type="common">Susabi-nori</name>
    <name type="synonym">Porphyra yezoensis</name>
    <dbReference type="NCBI Taxonomy" id="2788"/>
    <lineage>
        <taxon>Eukaryota</taxon>
        <taxon>Rhodophyta</taxon>
        <taxon>Bangiophyceae</taxon>
        <taxon>Bangiales</taxon>
        <taxon>Bangiaceae</taxon>
        <taxon>Pyropia</taxon>
    </lineage>
</organism>
<sequence length="186" mass="21158">MKKTLSIHSVRKDLILGSRRLSNYWWATIIFIGALGFLLAGLSSYFQVDLLPFTNSTDLVFIPQGIVMTFYGSIGVFLSLFLWLTIIWNIGAGYNEFNKDKGIVKIFRLGFPGKNRKICLQFNIKEIKSIKIDIKEGLNPRREIYLCTKDKRVIPLTRVGQPLLLSEVEEQAAEIARFLDVVLEGA</sequence>
<gene>
    <name evidence="1" type="primary">ycf4</name>
</gene>
<reference key="1">
    <citation type="submission" date="2003-11" db="EMBL/GenBank/DDBJ databases">
        <title>Whole genome sequence of Porphyra yezoensis chloroplast.</title>
        <authorList>
            <person name="Kunimoto M."/>
            <person name="Morishima K."/>
            <person name="Yoshikawa M."/>
            <person name="Fukuda S."/>
            <person name="Kobayashi T."/>
            <person name="Kobayashi M."/>
            <person name="Okazaki T."/>
            <person name="Ohara I."/>
            <person name="Nakayama I."/>
        </authorList>
    </citation>
    <scope>NUCLEOTIDE SEQUENCE [LARGE SCALE GENOMIC DNA]</scope>
    <source>
        <strain>U-51</strain>
    </source>
</reference>
<evidence type="ECO:0000255" key="1">
    <source>
        <dbReference type="HAMAP-Rule" id="MF_00437"/>
    </source>
</evidence>
<geneLocation type="chloroplast"/>
<comment type="function">
    <text evidence="1">Seems to be required for the assembly of the photosystem I complex.</text>
</comment>
<comment type="subcellular location">
    <subcellularLocation>
        <location evidence="1">Plastid</location>
        <location evidence="1">Chloroplast thylakoid membrane</location>
        <topology evidence="1">Multi-pass membrane protein</topology>
    </subcellularLocation>
</comment>
<comment type="similarity">
    <text evidence="1">Belongs to the Ycf4 family.</text>
</comment>
<dbReference type="EMBL" id="AP006715">
    <property type="protein sequence ID" value="BAE92344.1"/>
    <property type="molecule type" value="Genomic_DNA"/>
</dbReference>
<dbReference type="RefSeq" id="YP_536901.1">
    <property type="nucleotide sequence ID" value="NC_007932.1"/>
</dbReference>
<dbReference type="GeneID" id="3978904"/>
<dbReference type="GO" id="GO:0009535">
    <property type="term" value="C:chloroplast thylakoid membrane"/>
    <property type="evidence" value="ECO:0007669"/>
    <property type="project" value="UniProtKB-SubCell"/>
</dbReference>
<dbReference type="GO" id="GO:0009522">
    <property type="term" value="C:photosystem I"/>
    <property type="evidence" value="ECO:0007669"/>
    <property type="project" value="InterPro"/>
</dbReference>
<dbReference type="GO" id="GO:0015979">
    <property type="term" value="P:photosynthesis"/>
    <property type="evidence" value="ECO:0007669"/>
    <property type="project" value="UniProtKB-UniRule"/>
</dbReference>
<dbReference type="HAMAP" id="MF_00437">
    <property type="entry name" value="Ycf4"/>
    <property type="match status" value="1"/>
</dbReference>
<dbReference type="InterPro" id="IPR003359">
    <property type="entry name" value="PSI_Ycf4_assembly"/>
</dbReference>
<dbReference type="NCBIfam" id="NF002712">
    <property type="entry name" value="PRK02542.1"/>
    <property type="match status" value="1"/>
</dbReference>
<dbReference type="PANTHER" id="PTHR33288">
    <property type="match status" value="1"/>
</dbReference>
<dbReference type="PANTHER" id="PTHR33288:SF4">
    <property type="entry name" value="PHOTOSYSTEM I ASSEMBLY PROTEIN YCF4"/>
    <property type="match status" value="1"/>
</dbReference>
<dbReference type="Pfam" id="PF02392">
    <property type="entry name" value="Ycf4"/>
    <property type="match status" value="1"/>
</dbReference>
<keyword id="KW-0150">Chloroplast</keyword>
<keyword id="KW-0472">Membrane</keyword>
<keyword id="KW-0602">Photosynthesis</keyword>
<keyword id="KW-0934">Plastid</keyword>
<keyword id="KW-0793">Thylakoid</keyword>
<keyword id="KW-0812">Transmembrane</keyword>
<keyword id="KW-1133">Transmembrane helix</keyword>
<feature type="chain" id="PRO_0000275679" description="Photosystem I assembly protein Ycf4">
    <location>
        <begin position="1"/>
        <end position="186"/>
    </location>
</feature>
<feature type="transmembrane region" description="Helical" evidence="1">
    <location>
        <begin position="26"/>
        <end position="46"/>
    </location>
</feature>
<feature type="transmembrane region" description="Helical" evidence="1">
    <location>
        <begin position="66"/>
        <end position="86"/>
    </location>
</feature>
<accession>Q1XDR7</accession>
<proteinExistence type="inferred from homology"/>
<protein>
    <recommendedName>
        <fullName evidence="1">Photosystem I assembly protein Ycf4</fullName>
    </recommendedName>
</protein>
<name>YCF4_PYRYE</name>